<comment type="function">
    <text evidence="1">Exhibits a very high intrinsic GTPase hydrolysis rate. Involved in the addition of a carboxymethylaminomethyl (cmnm) group at the wobble position (U34) of certain tRNAs, forming tRNA-cmnm(5)s(2)U34.</text>
</comment>
<comment type="cofactor">
    <cofactor evidence="1">
        <name>K(+)</name>
        <dbReference type="ChEBI" id="CHEBI:29103"/>
    </cofactor>
    <text evidence="1">Binds 1 potassium ion per subunit.</text>
</comment>
<comment type="subunit">
    <text evidence="1">Homodimer. Heterotetramer of two MnmE and two MnmG subunits.</text>
</comment>
<comment type="subcellular location">
    <subcellularLocation>
        <location evidence="1">Cytoplasm</location>
    </subcellularLocation>
</comment>
<comment type="similarity">
    <text evidence="1">Belongs to the TRAFAC class TrmE-Era-EngA-EngB-Septin-like GTPase superfamily. TrmE GTPase family.</text>
</comment>
<reference key="1">
    <citation type="journal article" date="2009" name="PLoS Genet.">
        <title>The complete genome and proteome of Laribacter hongkongensis reveal potential mechanisms for adaptations to different temperatures and habitats.</title>
        <authorList>
            <person name="Woo P.C.Y."/>
            <person name="Lau S.K.P."/>
            <person name="Tse H."/>
            <person name="Teng J.L.L."/>
            <person name="Curreem S.O."/>
            <person name="Tsang A.K.L."/>
            <person name="Fan R.Y.Y."/>
            <person name="Wong G.K.M."/>
            <person name="Huang Y."/>
            <person name="Loman N.J."/>
            <person name="Snyder L.A.S."/>
            <person name="Cai J.J."/>
            <person name="Huang J.-D."/>
            <person name="Mak W."/>
            <person name="Pallen M.J."/>
            <person name="Lok S."/>
            <person name="Yuen K.-Y."/>
        </authorList>
    </citation>
    <scope>NUCLEOTIDE SEQUENCE [LARGE SCALE GENOMIC DNA]</scope>
    <source>
        <strain>HLHK9</strain>
    </source>
</reference>
<organism>
    <name type="scientific">Laribacter hongkongensis (strain HLHK9)</name>
    <dbReference type="NCBI Taxonomy" id="557598"/>
    <lineage>
        <taxon>Bacteria</taxon>
        <taxon>Pseudomonadati</taxon>
        <taxon>Pseudomonadota</taxon>
        <taxon>Betaproteobacteria</taxon>
        <taxon>Neisseriales</taxon>
        <taxon>Aquaspirillaceae</taxon>
        <taxon>Laribacter</taxon>
    </lineage>
</organism>
<evidence type="ECO:0000255" key="1">
    <source>
        <dbReference type="HAMAP-Rule" id="MF_00379"/>
    </source>
</evidence>
<keyword id="KW-0963">Cytoplasm</keyword>
<keyword id="KW-0342">GTP-binding</keyword>
<keyword id="KW-0378">Hydrolase</keyword>
<keyword id="KW-0460">Magnesium</keyword>
<keyword id="KW-0479">Metal-binding</keyword>
<keyword id="KW-0547">Nucleotide-binding</keyword>
<keyword id="KW-0630">Potassium</keyword>
<keyword id="KW-1185">Reference proteome</keyword>
<keyword id="KW-0819">tRNA processing</keyword>
<sequence length="450" mass="48258">MNYLADTIAAIATAPGRGGVGVIRLSGRNLLPLAGQLSGGRQPRPRHALYTDFVASDGQAIDSGLLLYFPAPHSFTGEDVLELQGHGGPVILRMLLARCLELGARLAEPGEFTKRAFLNDKMDLVEAESVADLIDAQSETAARSALKSLKGAFSAEIHRLVDTLIDLRMLTEATLDFPEEDDVEWLEKADALGRLAAVRRQLATVLATARQGAILREGMHVVLVGQPNVGKSSLMNALAGDEIAIVTDIAGTTRDTVREQIVLDGVPLHIIDTAGLRETTDTVERIGIERTWQAVERADVVLLLVDGRDGVTAADAAILARLPERLPRVFVHNKIDLTGETAGVSEEDGHVVVRLSARGGAGVDALRQVLLEAVGWQGESEGLFLARERHLDAIRRAEAELEAAGQAYGLAAELFAEHLRQAQACLSEITGEFSADDLLGVIFSRFCIGK</sequence>
<accession>C1D6H7</accession>
<gene>
    <name evidence="1" type="primary">mnmE</name>
    <name evidence="1" type="synonym">trmE</name>
    <name type="ordered locus">LHK_03235</name>
</gene>
<protein>
    <recommendedName>
        <fullName evidence="1">tRNA modification GTPase MnmE</fullName>
        <ecNumber evidence="1">3.6.-.-</ecNumber>
    </recommendedName>
</protein>
<proteinExistence type="inferred from homology"/>
<name>MNME_LARHH</name>
<feature type="chain" id="PRO_1000197056" description="tRNA modification GTPase MnmE">
    <location>
        <begin position="1"/>
        <end position="450"/>
    </location>
</feature>
<feature type="domain" description="TrmE-type G">
    <location>
        <begin position="218"/>
        <end position="375"/>
    </location>
</feature>
<feature type="binding site" evidence="1">
    <location>
        <position position="24"/>
    </location>
    <ligand>
        <name>(6S)-5-formyl-5,6,7,8-tetrahydrofolate</name>
        <dbReference type="ChEBI" id="CHEBI:57457"/>
    </ligand>
</feature>
<feature type="binding site" evidence="1">
    <location>
        <position position="82"/>
    </location>
    <ligand>
        <name>(6S)-5-formyl-5,6,7,8-tetrahydrofolate</name>
        <dbReference type="ChEBI" id="CHEBI:57457"/>
    </ligand>
</feature>
<feature type="binding site" evidence="1">
    <location>
        <position position="121"/>
    </location>
    <ligand>
        <name>(6S)-5-formyl-5,6,7,8-tetrahydrofolate</name>
        <dbReference type="ChEBI" id="CHEBI:57457"/>
    </ligand>
</feature>
<feature type="binding site" evidence="1">
    <location>
        <begin position="228"/>
        <end position="233"/>
    </location>
    <ligand>
        <name>GTP</name>
        <dbReference type="ChEBI" id="CHEBI:37565"/>
    </ligand>
</feature>
<feature type="binding site" evidence="1">
    <location>
        <position position="228"/>
    </location>
    <ligand>
        <name>K(+)</name>
        <dbReference type="ChEBI" id="CHEBI:29103"/>
    </ligand>
</feature>
<feature type="binding site" evidence="1">
    <location>
        <position position="232"/>
    </location>
    <ligand>
        <name>Mg(2+)</name>
        <dbReference type="ChEBI" id="CHEBI:18420"/>
    </ligand>
</feature>
<feature type="binding site" evidence="1">
    <location>
        <begin position="247"/>
        <end position="253"/>
    </location>
    <ligand>
        <name>GTP</name>
        <dbReference type="ChEBI" id="CHEBI:37565"/>
    </ligand>
</feature>
<feature type="binding site" evidence="1">
    <location>
        <position position="247"/>
    </location>
    <ligand>
        <name>K(+)</name>
        <dbReference type="ChEBI" id="CHEBI:29103"/>
    </ligand>
</feature>
<feature type="binding site" evidence="1">
    <location>
        <position position="249"/>
    </location>
    <ligand>
        <name>K(+)</name>
        <dbReference type="ChEBI" id="CHEBI:29103"/>
    </ligand>
</feature>
<feature type="binding site" evidence="1">
    <location>
        <position position="252"/>
    </location>
    <ligand>
        <name>K(+)</name>
        <dbReference type="ChEBI" id="CHEBI:29103"/>
    </ligand>
</feature>
<feature type="binding site" evidence="1">
    <location>
        <position position="253"/>
    </location>
    <ligand>
        <name>Mg(2+)</name>
        <dbReference type="ChEBI" id="CHEBI:18420"/>
    </ligand>
</feature>
<feature type="binding site" evidence="1">
    <location>
        <begin position="272"/>
        <end position="275"/>
    </location>
    <ligand>
        <name>GTP</name>
        <dbReference type="ChEBI" id="CHEBI:37565"/>
    </ligand>
</feature>
<feature type="binding site" evidence="1">
    <location>
        <begin position="356"/>
        <end position="358"/>
    </location>
    <ligand>
        <name>GTP</name>
        <dbReference type="ChEBI" id="CHEBI:37565"/>
    </ligand>
</feature>
<feature type="binding site" evidence="1">
    <location>
        <position position="450"/>
    </location>
    <ligand>
        <name>(6S)-5-formyl-5,6,7,8-tetrahydrofolate</name>
        <dbReference type="ChEBI" id="CHEBI:57457"/>
    </ligand>
</feature>
<dbReference type="EC" id="3.6.-.-" evidence="1"/>
<dbReference type="EMBL" id="CP001154">
    <property type="protein sequence ID" value="ACO76212.1"/>
    <property type="molecule type" value="Genomic_DNA"/>
</dbReference>
<dbReference type="RefSeq" id="WP_012698675.1">
    <property type="nucleotide sequence ID" value="NC_012559.1"/>
</dbReference>
<dbReference type="SMR" id="C1D6H7"/>
<dbReference type="STRING" id="557598.LHK_03235"/>
<dbReference type="KEGG" id="lhk:LHK_03235"/>
<dbReference type="eggNOG" id="COG0486">
    <property type="taxonomic scope" value="Bacteria"/>
</dbReference>
<dbReference type="HOGENOM" id="CLU_019624_4_1_4"/>
<dbReference type="Proteomes" id="UP000002010">
    <property type="component" value="Chromosome"/>
</dbReference>
<dbReference type="GO" id="GO:0005829">
    <property type="term" value="C:cytosol"/>
    <property type="evidence" value="ECO:0007669"/>
    <property type="project" value="TreeGrafter"/>
</dbReference>
<dbReference type="GO" id="GO:0005525">
    <property type="term" value="F:GTP binding"/>
    <property type="evidence" value="ECO:0007669"/>
    <property type="project" value="UniProtKB-UniRule"/>
</dbReference>
<dbReference type="GO" id="GO:0003924">
    <property type="term" value="F:GTPase activity"/>
    <property type="evidence" value="ECO:0007669"/>
    <property type="project" value="UniProtKB-UniRule"/>
</dbReference>
<dbReference type="GO" id="GO:0046872">
    <property type="term" value="F:metal ion binding"/>
    <property type="evidence" value="ECO:0007669"/>
    <property type="project" value="UniProtKB-KW"/>
</dbReference>
<dbReference type="GO" id="GO:0030488">
    <property type="term" value="P:tRNA methylation"/>
    <property type="evidence" value="ECO:0007669"/>
    <property type="project" value="TreeGrafter"/>
</dbReference>
<dbReference type="GO" id="GO:0002098">
    <property type="term" value="P:tRNA wobble uridine modification"/>
    <property type="evidence" value="ECO:0007669"/>
    <property type="project" value="TreeGrafter"/>
</dbReference>
<dbReference type="CDD" id="cd04164">
    <property type="entry name" value="trmE"/>
    <property type="match status" value="1"/>
</dbReference>
<dbReference type="CDD" id="cd14858">
    <property type="entry name" value="TrmE_N"/>
    <property type="match status" value="1"/>
</dbReference>
<dbReference type="FunFam" id="3.40.50.300:FF:001376">
    <property type="entry name" value="tRNA modification GTPase MnmE"/>
    <property type="match status" value="1"/>
</dbReference>
<dbReference type="Gene3D" id="3.40.50.300">
    <property type="entry name" value="P-loop containing nucleotide triphosphate hydrolases"/>
    <property type="match status" value="1"/>
</dbReference>
<dbReference type="Gene3D" id="3.30.1360.120">
    <property type="entry name" value="Probable tRNA modification gtpase trme, domain 1"/>
    <property type="match status" value="1"/>
</dbReference>
<dbReference type="Gene3D" id="1.20.120.430">
    <property type="entry name" value="tRNA modification GTPase MnmE domain 2"/>
    <property type="match status" value="1"/>
</dbReference>
<dbReference type="HAMAP" id="MF_00379">
    <property type="entry name" value="GTPase_MnmE"/>
    <property type="match status" value="1"/>
</dbReference>
<dbReference type="InterPro" id="IPR031168">
    <property type="entry name" value="G_TrmE"/>
</dbReference>
<dbReference type="InterPro" id="IPR006073">
    <property type="entry name" value="GTP-bd"/>
</dbReference>
<dbReference type="InterPro" id="IPR018948">
    <property type="entry name" value="GTP-bd_TrmE_N"/>
</dbReference>
<dbReference type="InterPro" id="IPR004520">
    <property type="entry name" value="GTPase_MnmE"/>
</dbReference>
<dbReference type="InterPro" id="IPR027368">
    <property type="entry name" value="MnmE_dom2"/>
</dbReference>
<dbReference type="InterPro" id="IPR025867">
    <property type="entry name" value="MnmE_helical"/>
</dbReference>
<dbReference type="InterPro" id="IPR027417">
    <property type="entry name" value="P-loop_NTPase"/>
</dbReference>
<dbReference type="InterPro" id="IPR005225">
    <property type="entry name" value="Small_GTP-bd"/>
</dbReference>
<dbReference type="InterPro" id="IPR027266">
    <property type="entry name" value="TrmE/GcvT_dom1"/>
</dbReference>
<dbReference type="NCBIfam" id="TIGR00450">
    <property type="entry name" value="mnmE_trmE_thdF"/>
    <property type="match status" value="1"/>
</dbReference>
<dbReference type="NCBIfam" id="NF003661">
    <property type="entry name" value="PRK05291.1-3"/>
    <property type="match status" value="1"/>
</dbReference>
<dbReference type="NCBIfam" id="TIGR00231">
    <property type="entry name" value="small_GTP"/>
    <property type="match status" value="1"/>
</dbReference>
<dbReference type="PANTHER" id="PTHR42714">
    <property type="entry name" value="TRNA MODIFICATION GTPASE GTPBP3"/>
    <property type="match status" value="1"/>
</dbReference>
<dbReference type="PANTHER" id="PTHR42714:SF2">
    <property type="entry name" value="TRNA MODIFICATION GTPASE GTPBP3, MITOCHONDRIAL"/>
    <property type="match status" value="1"/>
</dbReference>
<dbReference type="Pfam" id="PF01926">
    <property type="entry name" value="MMR_HSR1"/>
    <property type="match status" value="1"/>
</dbReference>
<dbReference type="Pfam" id="PF12631">
    <property type="entry name" value="MnmE_helical"/>
    <property type="match status" value="1"/>
</dbReference>
<dbReference type="Pfam" id="PF10396">
    <property type="entry name" value="TrmE_N"/>
    <property type="match status" value="1"/>
</dbReference>
<dbReference type="PRINTS" id="PR00326">
    <property type="entry name" value="GTP1OBG"/>
</dbReference>
<dbReference type="SUPFAM" id="SSF52540">
    <property type="entry name" value="P-loop containing nucleoside triphosphate hydrolases"/>
    <property type="match status" value="1"/>
</dbReference>
<dbReference type="PROSITE" id="PS51709">
    <property type="entry name" value="G_TRME"/>
    <property type="match status" value="1"/>
</dbReference>